<comment type="catalytic activity">
    <reaction evidence="1">
        <text>tRNA(Phe) + L-phenylalanine + ATP = L-phenylalanyl-tRNA(Phe) + AMP + diphosphate + H(+)</text>
        <dbReference type="Rhea" id="RHEA:19413"/>
        <dbReference type="Rhea" id="RHEA-COMP:9668"/>
        <dbReference type="Rhea" id="RHEA-COMP:9699"/>
        <dbReference type="ChEBI" id="CHEBI:15378"/>
        <dbReference type="ChEBI" id="CHEBI:30616"/>
        <dbReference type="ChEBI" id="CHEBI:33019"/>
        <dbReference type="ChEBI" id="CHEBI:58095"/>
        <dbReference type="ChEBI" id="CHEBI:78442"/>
        <dbReference type="ChEBI" id="CHEBI:78531"/>
        <dbReference type="ChEBI" id="CHEBI:456215"/>
        <dbReference type="EC" id="6.1.1.20"/>
    </reaction>
</comment>
<comment type="cofactor">
    <cofactor evidence="1">
        <name>Mg(2+)</name>
        <dbReference type="ChEBI" id="CHEBI:18420"/>
    </cofactor>
    <text evidence="1">Binds 2 magnesium ions per tetramer.</text>
</comment>
<comment type="subunit">
    <text evidence="1">Tetramer of two alpha and two beta subunits.</text>
</comment>
<comment type="subcellular location">
    <subcellularLocation>
        <location evidence="1">Cytoplasm</location>
    </subcellularLocation>
</comment>
<comment type="similarity">
    <text evidence="1">Belongs to the phenylalanyl-tRNA synthetase beta subunit family. Type 1 subfamily.</text>
</comment>
<feature type="chain" id="PRO_0000126902" description="Phenylalanine--tRNA ligase beta subunit">
    <location>
        <begin position="1"/>
        <end position="793"/>
    </location>
</feature>
<feature type="domain" description="tRNA-binding" evidence="1">
    <location>
        <begin position="39"/>
        <end position="148"/>
    </location>
</feature>
<feature type="domain" description="B5" evidence="1">
    <location>
        <begin position="401"/>
        <end position="477"/>
    </location>
</feature>
<feature type="domain" description="FDX-ACB" evidence="1">
    <location>
        <begin position="698"/>
        <end position="792"/>
    </location>
</feature>
<feature type="binding site" evidence="1">
    <location>
        <position position="455"/>
    </location>
    <ligand>
        <name>Mg(2+)</name>
        <dbReference type="ChEBI" id="CHEBI:18420"/>
        <note>shared with alpha subunit</note>
    </ligand>
</feature>
<feature type="binding site" evidence="1">
    <location>
        <position position="461"/>
    </location>
    <ligand>
        <name>Mg(2+)</name>
        <dbReference type="ChEBI" id="CHEBI:18420"/>
        <note>shared with alpha subunit</note>
    </ligand>
</feature>
<feature type="binding site" evidence="1">
    <location>
        <position position="464"/>
    </location>
    <ligand>
        <name>Mg(2+)</name>
        <dbReference type="ChEBI" id="CHEBI:18420"/>
        <note>shared with alpha subunit</note>
    </ligand>
</feature>
<feature type="binding site" evidence="1">
    <location>
        <position position="465"/>
    </location>
    <ligand>
        <name>Mg(2+)</name>
        <dbReference type="ChEBI" id="CHEBI:18420"/>
        <note>shared with alpha subunit</note>
    </ligand>
</feature>
<name>SYFB_LEGPL</name>
<reference key="1">
    <citation type="journal article" date="2004" name="Nat. Genet.">
        <title>Evidence in the Legionella pneumophila genome for exploitation of host cell functions and high genome plasticity.</title>
        <authorList>
            <person name="Cazalet C."/>
            <person name="Rusniok C."/>
            <person name="Brueggemann H."/>
            <person name="Zidane N."/>
            <person name="Magnier A."/>
            <person name="Ma L."/>
            <person name="Tichit M."/>
            <person name="Jarraud S."/>
            <person name="Bouchier C."/>
            <person name="Vandenesch F."/>
            <person name="Kunst F."/>
            <person name="Etienne J."/>
            <person name="Glaser P."/>
            <person name="Buchrieser C."/>
        </authorList>
    </citation>
    <scope>NUCLEOTIDE SEQUENCE [LARGE SCALE GENOMIC DNA]</scope>
    <source>
        <strain>Lens</strain>
    </source>
</reference>
<proteinExistence type="inferred from homology"/>
<gene>
    <name evidence="1" type="primary">pheT</name>
    <name type="ordered locus">lpl2638</name>
</gene>
<keyword id="KW-0030">Aminoacyl-tRNA synthetase</keyword>
<keyword id="KW-0067">ATP-binding</keyword>
<keyword id="KW-0963">Cytoplasm</keyword>
<keyword id="KW-0436">Ligase</keyword>
<keyword id="KW-0460">Magnesium</keyword>
<keyword id="KW-0479">Metal-binding</keyword>
<keyword id="KW-0547">Nucleotide-binding</keyword>
<keyword id="KW-0648">Protein biosynthesis</keyword>
<keyword id="KW-0694">RNA-binding</keyword>
<keyword id="KW-0820">tRNA-binding</keyword>
<organism>
    <name type="scientific">Legionella pneumophila (strain Lens)</name>
    <dbReference type="NCBI Taxonomy" id="297245"/>
    <lineage>
        <taxon>Bacteria</taxon>
        <taxon>Pseudomonadati</taxon>
        <taxon>Pseudomonadota</taxon>
        <taxon>Gammaproteobacteria</taxon>
        <taxon>Legionellales</taxon>
        <taxon>Legionellaceae</taxon>
        <taxon>Legionella</taxon>
    </lineage>
</organism>
<sequence>MKVSKLWLREWVNFSLTEQELAEQLTMAGLEVDAVNPVAGQFTHVIVAEVLNTKPHPDADKLTLCEVNINKDKPLKIVCGAANVRPGLRVALAMIGAHLPGGLQIKESKLRGELSQGMLCSATELGLAEHSEGIMELSDEAPIGMDLREYLALDDHVFDIDLTPNRADCFSILGVAREVAVLNKLPLIEQPIVTVPPAIDDGLRVNLIHSEACPRYCGRIIRNLNLEAKTPLWMAERLRRGGIRTLHPVVDVMNYVMLELGQPMHAFDLSKINGEINVRYSASGEQLELLDGQEVVLNDNVLVIADKEKPLAMAGIMGGANSAVQEQTQHIFLESAYFNPVTIAGVARKYGLFSDSSQRFERGVDPCLQSKALERATELILSISGGEPGPVIESFDKKFLPGTVSFLFDTTKVKKLTGLSIPLNEMKNLLEGLGVVIIKETNHFFEVTIPSHRVDLQQDADLVEEIIRLYGYDKLQAQPMQTSVQAGLISAKEKIATHVSSWFSAKGYHETISYSFVDPELQEALYPQKEFMELLNPISSELSQMRAGMWPGLIASMIYNSHRQQTAVKFFEIGVVFDLDGGQLKERSCIAGLLMGEQGNLNWSESARLFDFYDLKGDLQSLFASLKLDDVEFIQSSHHALHPGQSAQIVINGKHSGWIGVLHPRLSDAFDLDQDVVLFELNLESLINPTIPLYKPISKYPQIRRDLSFLVDRQISAMQIERVIRNTVKEDWLKSFDVFDVYMGKGIPEDKKSIAVAMTLQDDTRTLVDAEINLTISAIIKKLENEFSILLRE</sequence>
<accession>Q5WT87</accession>
<dbReference type="EC" id="6.1.1.20" evidence="1"/>
<dbReference type="EMBL" id="CR628337">
    <property type="protein sequence ID" value="CAH16879.1"/>
    <property type="molecule type" value="Genomic_DNA"/>
</dbReference>
<dbReference type="RefSeq" id="WP_011216577.1">
    <property type="nucleotide sequence ID" value="NC_006369.1"/>
</dbReference>
<dbReference type="SMR" id="Q5WT87"/>
<dbReference type="KEGG" id="lpf:lpl2638"/>
<dbReference type="LegioList" id="lpl2638"/>
<dbReference type="HOGENOM" id="CLU_016891_0_0_6"/>
<dbReference type="Proteomes" id="UP000002517">
    <property type="component" value="Chromosome"/>
</dbReference>
<dbReference type="GO" id="GO:0009328">
    <property type="term" value="C:phenylalanine-tRNA ligase complex"/>
    <property type="evidence" value="ECO:0007669"/>
    <property type="project" value="TreeGrafter"/>
</dbReference>
<dbReference type="GO" id="GO:0005524">
    <property type="term" value="F:ATP binding"/>
    <property type="evidence" value="ECO:0007669"/>
    <property type="project" value="UniProtKB-UniRule"/>
</dbReference>
<dbReference type="GO" id="GO:0000287">
    <property type="term" value="F:magnesium ion binding"/>
    <property type="evidence" value="ECO:0007669"/>
    <property type="project" value="UniProtKB-UniRule"/>
</dbReference>
<dbReference type="GO" id="GO:0004826">
    <property type="term" value="F:phenylalanine-tRNA ligase activity"/>
    <property type="evidence" value="ECO:0007669"/>
    <property type="project" value="UniProtKB-UniRule"/>
</dbReference>
<dbReference type="GO" id="GO:0000049">
    <property type="term" value="F:tRNA binding"/>
    <property type="evidence" value="ECO:0007669"/>
    <property type="project" value="UniProtKB-KW"/>
</dbReference>
<dbReference type="GO" id="GO:0006432">
    <property type="term" value="P:phenylalanyl-tRNA aminoacylation"/>
    <property type="evidence" value="ECO:0007669"/>
    <property type="project" value="UniProtKB-UniRule"/>
</dbReference>
<dbReference type="CDD" id="cd00769">
    <property type="entry name" value="PheRS_beta_core"/>
    <property type="match status" value="1"/>
</dbReference>
<dbReference type="CDD" id="cd02796">
    <property type="entry name" value="tRNA_bind_bactPheRS"/>
    <property type="match status" value="1"/>
</dbReference>
<dbReference type="FunFam" id="2.40.50.140:FF:000045">
    <property type="entry name" value="Phenylalanine--tRNA ligase beta subunit"/>
    <property type="match status" value="1"/>
</dbReference>
<dbReference type="FunFam" id="3.30.70.380:FF:000001">
    <property type="entry name" value="Phenylalanine--tRNA ligase beta subunit"/>
    <property type="match status" value="1"/>
</dbReference>
<dbReference type="FunFam" id="3.30.930.10:FF:000022">
    <property type="entry name" value="Phenylalanine--tRNA ligase beta subunit"/>
    <property type="match status" value="1"/>
</dbReference>
<dbReference type="FunFam" id="3.50.40.10:FF:000001">
    <property type="entry name" value="Phenylalanine--tRNA ligase beta subunit"/>
    <property type="match status" value="1"/>
</dbReference>
<dbReference type="Gene3D" id="3.30.56.10">
    <property type="match status" value="2"/>
</dbReference>
<dbReference type="Gene3D" id="3.30.930.10">
    <property type="entry name" value="Bira Bifunctional Protein, Domain 2"/>
    <property type="match status" value="1"/>
</dbReference>
<dbReference type="Gene3D" id="3.30.70.380">
    <property type="entry name" value="Ferrodoxin-fold anticodon-binding domain"/>
    <property type="match status" value="1"/>
</dbReference>
<dbReference type="Gene3D" id="2.40.50.140">
    <property type="entry name" value="Nucleic acid-binding proteins"/>
    <property type="match status" value="1"/>
</dbReference>
<dbReference type="Gene3D" id="3.50.40.10">
    <property type="entry name" value="Phenylalanyl-trna Synthetase, Chain B, domain 3"/>
    <property type="match status" value="1"/>
</dbReference>
<dbReference type="HAMAP" id="MF_00283">
    <property type="entry name" value="Phe_tRNA_synth_beta1"/>
    <property type="match status" value="1"/>
</dbReference>
<dbReference type="InterPro" id="IPR045864">
    <property type="entry name" value="aa-tRNA-synth_II/BPL/LPL"/>
</dbReference>
<dbReference type="InterPro" id="IPR005146">
    <property type="entry name" value="B3/B4_tRNA-bd"/>
</dbReference>
<dbReference type="InterPro" id="IPR009061">
    <property type="entry name" value="DNA-bd_dom_put_sf"/>
</dbReference>
<dbReference type="InterPro" id="IPR005121">
    <property type="entry name" value="Fdx_antiC-bd"/>
</dbReference>
<dbReference type="InterPro" id="IPR036690">
    <property type="entry name" value="Fdx_antiC-bd_sf"/>
</dbReference>
<dbReference type="InterPro" id="IPR012340">
    <property type="entry name" value="NA-bd_OB-fold"/>
</dbReference>
<dbReference type="InterPro" id="IPR045060">
    <property type="entry name" value="Phe-tRNA-ligase_IIc_bsu"/>
</dbReference>
<dbReference type="InterPro" id="IPR004532">
    <property type="entry name" value="Phe-tRNA-ligase_IIc_bsu_bact"/>
</dbReference>
<dbReference type="InterPro" id="IPR020825">
    <property type="entry name" value="Phe-tRNA_synthase-like_B3/B4"/>
</dbReference>
<dbReference type="InterPro" id="IPR041616">
    <property type="entry name" value="PheRS_beta_core"/>
</dbReference>
<dbReference type="InterPro" id="IPR002547">
    <property type="entry name" value="tRNA-bd_dom"/>
</dbReference>
<dbReference type="InterPro" id="IPR033714">
    <property type="entry name" value="tRNA_bind_bactPheRS"/>
</dbReference>
<dbReference type="InterPro" id="IPR005147">
    <property type="entry name" value="tRNA_synthase_B5-dom"/>
</dbReference>
<dbReference type="NCBIfam" id="TIGR00472">
    <property type="entry name" value="pheT_bact"/>
    <property type="match status" value="1"/>
</dbReference>
<dbReference type="NCBIfam" id="NF045760">
    <property type="entry name" value="YtpR"/>
    <property type="match status" value="1"/>
</dbReference>
<dbReference type="PANTHER" id="PTHR10947:SF0">
    <property type="entry name" value="PHENYLALANINE--TRNA LIGASE BETA SUBUNIT"/>
    <property type="match status" value="1"/>
</dbReference>
<dbReference type="PANTHER" id="PTHR10947">
    <property type="entry name" value="PHENYLALANYL-TRNA SYNTHETASE BETA CHAIN AND LEUCINE-RICH REPEAT-CONTAINING PROTEIN 47"/>
    <property type="match status" value="1"/>
</dbReference>
<dbReference type="Pfam" id="PF03483">
    <property type="entry name" value="B3_4"/>
    <property type="match status" value="1"/>
</dbReference>
<dbReference type="Pfam" id="PF03484">
    <property type="entry name" value="B5"/>
    <property type="match status" value="1"/>
</dbReference>
<dbReference type="Pfam" id="PF03147">
    <property type="entry name" value="FDX-ACB"/>
    <property type="match status" value="1"/>
</dbReference>
<dbReference type="Pfam" id="PF01588">
    <property type="entry name" value="tRNA_bind"/>
    <property type="match status" value="1"/>
</dbReference>
<dbReference type="Pfam" id="PF17759">
    <property type="entry name" value="tRNA_synthFbeta"/>
    <property type="match status" value="1"/>
</dbReference>
<dbReference type="SMART" id="SM00873">
    <property type="entry name" value="B3_4"/>
    <property type="match status" value="1"/>
</dbReference>
<dbReference type="SMART" id="SM00874">
    <property type="entry name" value="B5"/>
    <property type="match status" value="1"/>
</dbReference>
<dbReference type="SMART" id="SM00896">
    <property type="entry name" value="FDX-ACB"/>
    <property type="match status" value="1"/>
</dbReference>
<dbReference type="SUPFAM" id="SSF54991">
    <property type="entry name" value="Anticodon-binding domain of PheRS"/>
    <property type="match status" value="1"/>
</dbReference>
<dbReference type="SUPFAM" id="SSF55681">
    <property type="entry name" value="Class II aaRS and biotin synthetases"/>
    <property type="match status" value="1"/>
</dbReference>
<dbReference type="SUPFAM" id="SSF50249">
    <property type="entry name" value="Nucleic acid-binding proteins"/>
    <property type="match status" value="1"/>
</dbReference>
<dbReference type="SUPFAM" id="SSF56037">
    <property type="entry name" value="PheT/TilS domain"/>
    <property type="match status" value="1"/>
</dbReference>
<dbReference type="SUPFAM" id="SSF46955">
    <property type="entry name" value="Putative DNA-binding domain"/>
    <property type="match status" value="1"/>
</dbReference>
<dbReference type="PROSITE" id="PS51483">
    <property type="entry name" value="B5"/>
    <property type="match status" value="1"/>
</dbReference>
<dbReference type="PROSITE" id="PS51447">
    <property type="entry name" value="FDX_ACB"/>
    <property type="match status" value="1"/>
</dbReference>
<dbReference type="PROSITE" id="PS50886">
    <property type="entry name" value="TRBD"/>
    <property type="match status" value="1"/>
</dbReference>
<evidence type="ECO:0000255" key="1">
    <source>
        <dbReference type="HAMAP-Rule" id="MF_00283"/>
    </source>
</evidence>
<protein>
    <recommendedName>
        <fullName evidence="1">Phenylalanine--tRNA ligase beta subunit</fullName>
        <ecNumber evidence="1">6.1.1.20</ecNumber>
    </recommendedName>
    <alternativeName>
        <fullName evidence="1">Phenylalanyl-tRNA synthetase beta subunit</fullName>
        <shortName evidence="1">PheRS</shortName>
    </alternativeName>
</protein>